<feature type="chain" id="PRO_0000416690" description="Probable ascorbate-specific transmembrane electron transporter 2">
    <location>
        <begin position="1"/>
        <end position="236"/>
    </location>
</feature>
<feature type="topological domain" description="Cytoplasmic" evidence="3">
    <location>
        <begin position="1"/>
        <end position="11"/>
    </location>
</feature>
<feature type="transmembrane region" description="Helical" evidence="3">
    <location>
        <begin position="12"/>
        <end position="32"/>
    </location>
</feature>
<feature type="topological domain" description="Extracellular" evidence="3">
    <location>
        <begin position="33"/>
        <end position="53"/>
    </location>
</feature>
<feature type="transmembrane region" description="Helical" evidence="3">
    <location>
        <begin position="54"/>
        <end position="74"/>
    </location>
</feature>
<feature type="topological domain" description="Cytoplasmic" evidence="3">
    <location>
        <begin position="75"/>
        <end position="84"/>
    </location>
</feature>
<feature type="transmembrane region" description="Helical" evidence="3">
    <location>
        <begin position="85"/>
        <end position="105"/>
    </location>
</feature>
<feature type="topological domain" description="Extracellular" evidence="3">
    <location>
        <begin position="106"/>
        <end position="122"/>
    </location>
</feature>
<feature type="transmembrane region" description="Helical" evidence="3">
    <location>
        <begin position="123"/>
        <end position="143"/>
    </location>
</feature>
<feature type="topological domain" description="Cytoplasmic" evidence="3">
    <location>
        <begin position="144"/>
        <end position="153"/>
    </location>
</feature>
<feature type="transmembrane region" description="Helical" evidence="3">
    <location>
        <begin position="154"/>
        <end position="174"/>
    </location>
</feature>
<feature type="topological domain" description="Extracellular" evidence="3">
    <location>
        <begin position="175"/>
        <end position="196"/>
    </location>
</feature>
<feature type="transmembrane region" description="Helical" evidence="3">
    <location>
        <begin position="197"/>
        <end position="217"/>
    </location>
</feature>
<feature type="topological domain" description="Cytoplasmic" evidence="3">
    <location>
        <begin position="218"/>
        <end position="236"/>
    </location>
</feature>
<feature type="domain" description="Cytochrome b561" evidence="4">
    <location>
        <begin position="15"/>
        <end position="219"/>
    </location>
</feature>
<feature type="binding site" description="axial binding residue" evidence="2">
    <location>
        <position position="52"/>
    </location>
    <ligand>
        <name>heme b</name>
        <dbReference type="ChEBI" id="CHEBI:60344"/>
        <label>1</label>
    </ligand>
    <ligandPart>
        <name>Fe</name>
        <dbReference type="ChEBI" id="CHEBI:18248"/>
    </ligandPart>
</feature>
<feature type="binding site" evidence="1">
    <location>
        <begin position="67"/>
        <end position="75"/>
    </location>
    <ligand>
        <name>L-ascorbate</name>
        <dbReference type="ChEBI" id="CHEBI:38290"/>
    </ligand>
</feature>
<feature type="binding site" description="axial binding residue" evidence="2">
    <location>
        <position position="86"/>
    </location>
    <ligand>
        <name>heme b</name>
        <dbReference type="ChEBI" id="CHEBI:60344"/>
        <label>2</label>
    </ligand>
    <ligandPart>
        <name>Fe</name>
        <dbReference type="ChEBI" id="CHEBI:18248"/>
    </ligandPart>
</feature>
<feature type="binding site" evidence="1">
    <location>
        <begin position="116"/>
        <end position="125"/>
    </location>
    <ligand>
        <name>monodehydro-L-ascorbate radical</name>
        <dbReference type="ChEBI" id="CHEBI:59513"/>
    </ligand>
</feature>
<feature type="binding site" description="axial binding residue" evidence="2">
    <location>
        <position position="120"/>
    </location>
    <ligand>
        <name>heme b</name>
        <dbReference type="ChEBI" id="CHEBI:60344"/>
        <label>1</label>
    </ligand>
    <ligandPart>
        <name>Fe</name>
        <dbReference type="ChEBI" id="CHEBI:18248"/>
    </ligandPart>
</feature>
<feature type="binding site" description="axial binding residue" evidence="2">
    <location>
        <position position="159"/>
    </location>
    <ligand>
        <name>heme b</name>
        <dbReference type="ChEBI" id="CHEBI:60344"/>
        <label>2</label>
    </ligand>
    <ligandPart>
        <name>Fe</name>
        <dbReference type="ChEBI" id="CHEBI:18248"/>
    </ligandPart>
</feature>
<name>ACET2_ORYSJ</name>
<protein>
    <recommendedName>
        <fullName>Probable ascorbate-specific transmembrane electron transporter 2</fullName>
        <ecNumber>1.-.-.-</ecNumber>
    </recommendedName>
    <alternativeName>
        <fullName>Cytochrome b561-2</fullName>
    </alternativeName>
</protein>
<sequence length="236" mass="25355">MAAGLGVKAAPFTYVAHALAVAAAVMVLVWCISFRGGLAFEADNKNLIFNVHPVLMLIGYIILGSEAIMIYKIFPKLNHDTTKLIHLILHAIAIVLGAVGIYCAFKFHNESGIANLYSLHSWLGIGTISLYGIQWIFGFVAFFYPGAAPHVRRGALPWHVLFGLFVYVLTLATAELGLLEKLTFLQSSGLDKYGAEAFLVNFTGLVVALFGAAVVVAAVAPAHVEEPEGYAPIPVN</sequence>
<gene>
    <name type="ordered locus">Os04g0533500</name>
    <name type="ordered locus">LOC_Os04g45090</name>
    <name type="ORF">OsJ_15584.15</name>
    <name type="ORF">OSJNBb0039L24</name>
</gene>
<accession>Q7XMK3</accession>
<accession>A0A0P0WD52</accession>
<accession>B9FGB7</accession>
<reference key="1">
    <citation type="journal article" date="2002" name="Nature">
        <title>Sequence and analysis of rice chromosome 4.</title>
        <authorList>
            <person name="Feng Q."/>
            <person name="Zhang Y."/>
            <person name="Hao P."/>
            <person name="Wang S."/>
            <person name="Fu G."/>
            <person name="Huang Y."/>
            <person name="Li Y."/>
            <person name="Zhu J."/>
            <person name="Liu Y."/>
            <person name="Hu X."/>
            <person name="Jia P."/>
            <person name="Zhang Y."/>
            <person name="Zhao Q."/>
            <person name="Ying K."/>
            <person name="Yu S."/>
            <person name="Tang Y."/>
            <person name="Weng Q."/>
            <person name="Zhang L."/>
            <person name="Lu Y."/>
            <person name="Mu J."/>
            <person name="Lu Y."/>
            <person name="Zhang L.S."/>
            <person name="Yu Z."/>
            <person name="Fan D."/>
            <person name="Liu X."/>
            <person name="Lu T."/>
            <person name="Li C."/>
            <person name="Wu Y."/>
            <person name="Sun T."/>
            <person name="Lei H."/>
            <person name="Li T."/>
            <person name="Hu H."/>
            <person name="Guan J."/>
            <person name="Wu M."/>
            <person name="Zhang R."/>
            <person name="Zhou B."/>
            <person name="Chen Z."/>
            <person name="Chen L."/>
            <person name="Jin Z."/>
            <person name="Wang R."/>
            <person name="Yin H."/>
            <person name="Cai Z."/>
            <person name="Ren S."/>
            <person name="Lv G."/>
            <person name="Gu W."/>
            <person name="Zhu G."/>
            <person name="Tu Y."/>
            <person name="Jia J."/>
            <person name="Zhang Y."/>
            <person name="Chen J."/>
            <person name="Kang H."/>
            <person name="Chen X."/>
            <person name="Shao C."/>
            <person name="Sun Y."/>
            <person name="Hu Q."/>
            <person name="Zhang X."/>
            <person name="Zhang W."/>
            <person name="Wang L."/>
            <person name="Ding C."/>
            <person name="Sheng H."/>
            <person name="Gu J."/>
            <person name="Chen S."/>
            <person name="Ni L."/>
            <person name="Zhu F."/>
            <person name="Chen W."/>
            <person name="Lan L."/>
            <person name="Lai Y."/>
            <person name="Cheng Z."/>
            <person name="Gu M."/>
            <person name="Jiang J."/>
            <person name="Li J."/>
            <person name="Hong G."/>
            <person name="Xue Y."/>
            <person name="Han B."/>
        </authorList>
    </citation>
    <scope>NUCLEOTIDE SEQUENCE [LARGE SCALE GENOMIC DNA]</scope>
    <source>
        <strain>cv. Nipponbare</strain>
    </source>
</reference>
<reference key="2">
    <citation type="journal article" date="2005" name="Nature">
        <title>The map-based sequence of the rice genome.</title>
        <authorList>
            <consortium name="International rice genome sequencing project (IRGSP)"/>
        </authorList>
    </citation>
    <scope>NUCLEOTIDE SEQUENCE [LARGE SCALE GENOMIC DNA]</scope>
    <source>
        <strain>cv. Nipponbare</strain>
    </source>
</reference>
<reference key="3">
    <citation type="journal article" date="2008" name="Nucleic Acids Res.">
        <title>The rice annotation project database (RAP-DB): 2008 update.</title>
        <authorList>
            <consortium name="The rice annotation project (RAP)"/>
        </authorList>
    </citation>
    <scope>GENOME REANNOTATION</scope>
    <source>
        <strain>cv. Nipponbare</strain>
    </source>
</reference>
<reference key="4">
    <citation type="journal article" date="2013" name="Rice">
        <title>Improvement of the Oryza sativa Nipponbare reference genome using next generation sequence and optical map data.</title>
        <authorList>
            <person name="Kawahara Y."/>
            <person name="de la Bastide M."/>
            <person name="Hamilton J.P."/>
            <person name="Kanamori H."/>
            <person name="McCombie W.R."/>
            <person name="Ouyang S."/>
            <person name="Schwartz D.C."/>
            <person name="Tanaka T."/>
            <person name="Wu J."/>
            <person name="Zhou S."/>
            <person name="Childs K.L."/>
            <person name="Davidson R.M."/>
            <person name="Lin H."/>
            <person name="Quesada-Ocampo L."/>
            <person name="Vaillancourt B."/>
            <person name="Sakai H."/>
            <person name="Lee S.S."/>
            <person name="Kim J."/>
            <person name="Numa H."/>
            <person name="Itoh T."/>
            <person name="Buell C.R."/>
            <person name="Matsumoto T."/>
        </authorList>
    </citation>
    <scope>GENOME REANNOTATION</scope>
    <source>
        <strain>cv. Nipponbare</strain>
    </source>
</reference>
<reference key="5">
    <citation type="journal article" date="2005" name="PLoS Biol.">
        <title>The genomes of Oryza sativa: a history of duplications.</title>
        <authorList>
            <person name="Yu J."/>
            <person name="Wang J."/>
            <person name="Lin W."/>
            <person name="Li S."/>
            <person name="Li H."/>
            <person name="Zhou J."/>
            <person name="Ni P."/>
            <person name="Dong W."/>
            <person name="Hu S."/>
            <person name="Zeng C."/>
            <person name="Zhang J."/>
            <person name="Zhang Y."/>
            <person name="Li R."/>
            <person name="Xu Z."/>
            <person name="Li S."/>
            <person name="Li X."/>
            <person name="Zheng H."/>
            <person name="Cong L."/>
            <person name="Lin L."/>
            <person name="Yin J."/>
            <person name="Geng J."/>
            <person name="Li G."/>
            <person name="Shi J."/>
            <person name="Liu J."/>
            <person name="Lv H."/>
            <person name="Li J."/>
            <person name="Wang J."/>
            <person name="Deng Y."/>
            <person name="Ran L."/>
            <person name="Shi X."/>
            <person name="Wang X."/>
            <person name="Wu Q."/>
            <person name="Li C."/>
            <person name="Ren X."/>
            <person name="Wang J."/>
            <person name="Wang X."/>
            <person name="Li D."/>
            <person name="Liu D."/>
            <person name="Zhang X."/>
            <person name="Ji Z."/>
            <person name="Zhao W."/>
            <person name="Sun Y."/>
            <person name="Zhang Z."/>
            <person name="Bao J."/>
            <person name="Han Y."/>
            <person name="Dong L."/>
            <person name="Ji J."/>
            <person name="Chen P."/>
            <person name="Wu S."/>
            <person name="Liu J."/>
            <person name="Xiao Y."/>
            <person name="Bu D."/>
            <person name="Tan J."/>
            <person name="Yang L."/>
            <person name="Ye C."/>
            <person name="Zhang J."/>
            <person name="Xu J."/>
            <person name="Zhou Y."/>
            <person name="Yu Y."/>
            <person name="Zhang B."/>
            <person name="Zhuang S."/>
            <person name="Wei H."/>
            <person name="Liu B."/>
            <person name="Lei M."/>
            <person name="Yu H."/>
            <person name="Li Y."/>
            <person name="Xu H."/>
            <person name="Wei S."/>
            <person name="He X."/>
            <person name="Fang L."/>
            <person name="Zhang Z."/>
            <person name="Zhang Y."/>
            <person name="Huang X."/>
            <person name="Su Z."/>
            <person name="Tong W."/>
            <person name="Li J."/>
            <person name="Tong Z."/>
            <person name="Li S."/>
            <person name="Ye J."/>
            <person name="Wang L."/>
            <person name="Fang L."/>
            <person name="Lei T."/>
            <person name="Chen C.-S."/>
            <person name="Chen H.-C."/>
            <person name="Xu Z."/>
            <person name="Li H."/>
            <person name="Huang H."/>
            <person name="Zhang F."/>
            <person name="Xu H."/>
            <person name="Li N."/>
            <person name="Zhao C."/>
            <person name="Li S."/>
            <person name="Dong L."/>
            <person name="Huang Y."/>
            <person name="Li L."/>
            <person name="Xi Y."/>
            <person name="Qi Q."/>
            <person name="Li W."/>
            <person name="Zhang B."/>
            <person name="Hu W."/>
            <person name="Zhang Y."/>
            <person name="Tian X."/>
            <person name="Jiao Y."/>
            <person name="Liang X."/>
            <person name="Jin J."/>
            <person name="Gao L."/>
            <person name="Zheng W."/>
            <person name="Hao B."/>
            <person name="Liu S.-M."/>
            <person name="Wang W."/>
            <person name="Yuan L."/>
            <person name="Cao M."/>
            <person name="McDermott J."/>
            <person name="Samudrala R."/>
            <person name="Wang J."/>
            <person name="Wong G.K.-S."/>
            <person name="Yang H."/>
        </authorList>
    </citation>
    <scope>NUCLEOTIDE SEQUENCE [LARGE SCALE GENOMIC DNA]</scope>
    <source>
        <strain>cv. Nipponbare</strain>
    </source>
</reference>
<reference key="6">
    <citation type="journal article" date="2003" name="Science">
        <title>Collection, mapping, and annotation of over 28,000 cDNA clones from japonica rice.</title>
        <authorList>
            <consortium name="The rice full-length cDNA consortium"/>
        </authorList>
    </citation>
    <scope>NUCLEOTIDE SEQUENCE [LARGE SCALE MRNA]</scope>
    <source>
        <strain>cv. Nipponbare</strain>
    </source>
</reference>
<organism>
    <name type="scientific">Oryza sativa subsp. japonica</name>
    <name type="common">Rice</name>
    <dbReference type="NCBI Taxonomy" id="39947"/>
    <lineage>
        <taxon>Eukaryota</taxon>
        <taxon>Viridiplantae</taxon>
        <taxon>Streptophyta</taxon>
        <taxon>Embryophyta</taxon>
        <taxon>Tracheophyta</taxon>
        <taxon>Spermatophyta</taxon>
        <taxon>Magnoliopsida</taxon>
        <taxon>Liliopsida</taxon>
        <taxon>Poales</taxon>
        <taxon>Poaceae</taxon>
        <taxon>BOP clade</taxon>
        <taxon>Oryzoideae</taxon>
        <taxon>Oryzeae</taxon>
        <taxon>Oryzinae</taxon>
        <taxon>Oryza</taxon>
        <taxon>Oryza sativa</taxon>
    </lineage>
</organism>
<proteinExistence type="evidence at transcript level"/>
<dbReference type="EC" id="1.-.-.-"/>
<dbReference type="EMBL" id="AL663006">
    <property type="protein sequence ID" value="CAE04576.2"/>
    <property type="molecule type" value="Genomic_DNA"/>
</dbReference>
<dbReference type="EMBL" id="AP008210">
    <property type="protein sequence ID" value="BAF15324.1"/>
    <property type="molecule type" value="Genomic_DNA"/>
</dbReference>
<dbReference type="EMBL" id="AP014960">
    <property type="protein sequence ID" value="BAS90235.1"/>
    <property type="molecule type" value="Genomic_DNA"/>
</dbReference>
<dbReference type="EMBL" id="CM000141">
    <property type="protein sequence ID" value="EEE61401.1"/>
    <property type="status" value="ALT_SEQ"/>
    <property type="molecule type" value="Genomic_DNA"/>
</dbReference>
<dbReference type="EMBL" id="AK061426">
    <property type="protein sequence ID" value="BAG87918.1"/>
    <property type="molecule type" value="mRNA"/>
</dbReference>
<dbReference type="EMBL" id="AK069219">
    <property type="protein sequence ID" value="BAG91320.1"/>
    <property type="molecule type" value="mRNA"/>
</dbReference>
<dbReference type="RefSeq" id="XP_015634143.1">
    <property type="nucleotide sequence ID" value="XM_015778657.1"/>
</dbReference>
<dbReference type="SMR" id="Q7XMK3"/>
<dbReference type="FunCoup" id="Q7XMK3">
    <property type="interactions" value="436"/>
</dbReference>
<dbReference type="STRING" id="39947.Q7XMK3"/>
<dbReference type="PaxDb" id="39947-Q7XMK3"/>
<dbReference type="EnsemblPlants" id="Os04t0533500-02">
    <property type="protein sequence ID" value="Os04t0533500-02"/>
    <property type="gene ID" value="Os04g0533500"/>
</dbReference>
<dbReference type="Gramene" id="Os04t0533500-02">
    <property type="protein sequence ID" value="Os04t0533500-02"/>
    <property type="gene ID" value="Os04g0533500"/>
</dbReference>
<dbReference type="KEGG" id="dosa:Os04g0533500"/>
<dbReference type="eggNOG" id="KOG1619">
    <property type="taxonomic scope" value="Eukaryota"/>
</dbReference>
<dbReference type="HOGENOM" id="CLU_069712_0_1_1"/>
<dbReference type="InParanoid" id="Q7XMK3"/>
<dbReference type="OMA" id="NWHPVLA"/>
<dbReference type="OrthoDB" id="907479at2759"/>
<dbReference type="Proteomes" id="UP000000763">
    <property type="component" value="Chromosome 4"/>
</dbReference>
<dbReference type="Proteomes" id="UP000007752">
    <property type="component" value="Chromosome 4"/>
</dbReference>
<dbReference type="Proteomes" id="UP000059680">
    <property type="component" value="Chromosome 4"/>
</dbReference>
<dbReference type="GO" id="GO:0016020">
    <property type="term" value="C:membrane"/>
    <property type="evidence" value="ECO:0007669"/>
    <property type="project" value="UniProtKB-SubCell"/>
</dbReference>
<dbReference type="GO" id="GO:0046872">
    <property type="term" value="F:metal ion binding"/>
    <property type="evidence" value="ECO:0007669"/>
    <property type="project" value="UniProtKB-KW"/>
</dbReference>
<dbReference type="GO" id="GO:0016491">
    <property type="term" value="F:oxidoreductase activity"/>
    <property type="evidence" value="ECO:0000318"/>
    <property type="project" value="GO_Central"/>
</dbReference>
<dbReference type="CDD" id="cd08766">
    <property type="entry name" value="Cyt_b561_ACYB-1_like"/>
    <property type="match status" value="1"/>
</dbReference>
<dbReference type="FunFam" id="1.20.120.1770:FF:000001">
    <property type="entry name" value="Cytochrome b reductase 1"/>
    <property type="match status" value="1"/>
</dbReference>
<dbReference type="Gene3D" id="1.20.120.1770">
    <property type="match status" value="1"/>
</dbReference>
<dbReference type="InterPro" id="IPR043205">
    <property type="entry name" value="CYB561/CYBRD1-like"/>
</dbReference>
<dbReference type="InterPro" id="IPR006593">
    <property type="entry name" value="Cyt_b561/ferric_Rdtase_TM"/>
</dbReference>
<dbReference type="PANTHER" id="PTHR10106:SF17">
    <property type="entry name" value="ASCORBATE-SPECIFIC TRANSMEMBRANE ELECTRON TRANSPORTER 2-RELATED"/>
    <property type="match status" value="1"/>
</dbReference>
<dbReference type="PANTHER" id="PTHR10106">
    <property type="entry name" value="CYTOCHROME B561-RELATED"/>
    <property type="match status" value="1"/>
</dbReference>
<dbReference type="Pfam" id="PF03188">
    <property type="entry name" value="Cytochrom_B561"/>
    <property type="match status" value="1"/>
</dbReference>
<dbReference type="SMART" id="SM00665">
    <property type="entry name" value="B561"/>
    <property type="match status" value="1"/>
</dbReference>
<dbReference type="PROSITE" id="PS50939">
    <property type="entry name" value="CYTOCHROME_B561"/>
    <property type="match status" value="1"/>
</dbReference>
<keyword id="KW-0249">Electron transport</keyword>
<keyword id="KW-0349">Heme</keyword>
<keyword id="KW-0408">Iron</keyword>
<keyword id="KW-0472">Membrane</keyword>
<keyword id="KW-0479">Metal-binding</keyword>
<keyword id="KW-0560">Oxidoreductase</keyword>
<keyword id="KW-1185">Reference proteome</keyword>
<keyword id="KW-0812">Transmembrane</keyword>
<keyword id="KW-1133">Transmembrane helix</keyword>
<keyword id="KW-0813">Transport</keyword>
<evidence type="ECO:0000250" key="1"/>
<evidence type="ECO:0000250" key="2">
    <source>
        <dbReference type="UniProtKB" id="Q9SWS1"/>
    </source>
</evidence>
<evidence type="ECO:0000255" key="3"/>
<evidence type="ECO:0000255" key="4">
    <source>
        <dbReference type="PROSITE-ProRule" id="PRU00242"/>
    </source>
</evidence>
<evidence type="ECO:0000305" key="5"/>
<comment type="function">
    <text evidence="1">Two-heme-containing cytochrome. Catalyzes ascorbate-dependent trans-membrane electron transfer by utilizing a concerted H(+)/e(-) transfer mechanism (By similarity).</text>
</comment>
<comment type="cofactor">
    <cofactor evidence="2">
        <name>heme b</name>
        <dbReference type="ChEBI" id="CHEBI:60344"/>
    </cofactor>
    <text evidence="2">Binds 2 heme b groups non-covalently.</text>
</comment>
<comment type="subcellular location">
    <subcellularLocation>
        <location evidence="5">Membrane</location>
        <topology evidence="5">Multi-pass membrane protein</topology>
    </subcellularLocation>
</comment>
<comment type="sequence caution" evidence="5">
    <conflict type="erroneous gene model prediction">
        <sequence resource="EMBL-CDS" id="EEE61401"/>
    </conflict>
</comment>